<accession>C1EPP8</accession>
<name>PYRDB_BACC3</name>
<proteinExistence type="inferred from homology"/>
<sequence length="309" mass="32990">MNRLQVELPGLSLKNPIIPASGCFGFGREYAQFYDLSVLGSIMIKATTEQPRYGNPTPRVAETPGGMLNAIGLQNPGLEKVMNSELPWLEQFDLPIIANVAGSQAEDYVAVAKEISKAPNVHALELNISCPNVKTGGIAFGTNPEIAADLTKRVKEVSEVPVYVKLSPNVANIVEIAKAIENAGADGLTMINTLLGMRLDLKTAKPILANRTGGLSGPAIKPVAIRMVHEVSQAVNIPIIGMGGIETAEDVIEFFYAGASAVAVGTANFIDPFVCPTIIEELPALLDELGFDHISECQGRSWKQTCHSR</sequence>
<protein>
    <recommendedName>
        <fullName>Dihydroorotate dehydrogenase B (NAD(+)), catalytic subunit</fullName>
        <shortName>DHOD B</shortName>
        <shortName>DHODase B</shortName>
        <shortName>DHOdehase B</shortName>
        <ecNumber>1.3.1.14</ecNumber>
    </recommendedName>
    <alternativeName>
        <fullName>Dihydroorotate oxidase B</fullName>
    </alternativeName>
    <alternativeName>
        <fullName>Orotate reductase (NADH)</fullName>
    </alternativeName>
</protein>
<comment type="function">
    <text evidence="1">Catalyzes the conversion of dihydroorotate to orotate with NAD(+) as electron acceptor.</text>
</comment>
<comment type="catalytic activity">
    <reaction>
        <text>(S)-dihydroorotate + NAD(+) = orotate + NADH + H(+)</text>
        <dbReference type="Rhea" id="RHEA:13513"/>
        <dbReference type="ChEBI" id="CHEBI:15378"/>
        <dbReference type="ChEBI" id="CHEBI:30839"/>
        <dbReference type="ChEBI" id="CHEBI:30864"/>
        <dbReference type="ChEBI" id="CHEBI:57540"/>
        <dbReference type="ChEBI" id="CHEBI:57945"/>
        <dbReference type="EC" id="1.3.1.14"/>
    </reaction>
</comment>
<comment type="cofactor">
    <cofactor evidence="1">
        <name>FMN</name>
        <dbReference type="ChEBI" id="CHEBI:58210"/>
    </cofactor>
    <text evidence="1">Binds 1 FMN per subunit.</text>
</comment>
<comment type="pathway">
    <text>Pyrimidine metabolism; UMP biosynthesis via de novo pathway; orotate from (S)-dihydroorotate (NAD(+) route): step 1/1.</text>
</comment>
<comment type="subunit">
    <text evidence="1">Heterotetramer of 2 PyrK and 2 PyrD type B subunits.</text>
</comment>
<comment type="subcellular location">
    <subcellularLocation>
        <location evidence="1">Cytoplasm</location>
    </subcellularLocation>
</comment>
<comment type="similarity">
    <text evidence="2">Belongs to the dihydroorotate dehydrogenase family. Type 1 subfamily.</text>
</comment>
<evidence type="ECO:0000250" key="1"/>
<evidence type="ECO:0000305" key="2"/>
<keyword id="KW-0963">Cytoplasm</keyword>
<keyword id="KW-0285">Flavoprotein</keyword>
<keyword id="KW-0288">FMN</keyword>
<keyword id="KW-0520">NAD</keyword>
<keyword id="KW-0560">Oxidoreductase</keyword>
<keyword id="KW-0665">Pyrimidine biosynthesis</keyword>
<reference key="1">
    <citation type="submission" date="2009-02" db="EMBL/GenBank/DDBJ databases">
        <title>Genome sequence of Bacillus cereus 03BB102.</title>
        <authorList>
            <person name="Dodson R.J."/>
            <person name="Jackson P."/>
            <person name="Munk A.C."/>
            <person name="Brettin T."/>
            <person name="Bruce D."/>
            <person name="Detter C."/>
            <person name="Tapia R."/>
            <person name="Han C."/>
            <person name="Sutton G."/>
            <person name="Sims D."/>
        </authorList>
    </citation>
    <scope>NUCLEOTIDE SEQUENCE [LARGE SCALE GENOMIC DNA]</scope>
    <source>
        <strain>03BB102</strain>
    </source>
</reference>
<dbReference type="EC" id="1.3.1.14"/>
<dbReference type="EMBL" id="CP001407">
    <property type="protein sequence ID" value="ACO29532.1"/>
    <property type="molecule type" value="Genomic_DNA"/>
</dbReference>
<dbReference type="RefSeq" id="WP_001081057.1">
    <property type="nucleotide sequence ID" value="NZ_CP009318.1"/>
</dbReference>
<dbReference type="SMR" id="C1EPP8"/>
<dbReference type="GeneID" id="83637592"/>
<dbReference type="KEGG" id="bcx:BCA_3985"/>
<dbReference type="PATRIC" id="fig|572264.18.peg.3941"/>
<dbReference type="UniPathway" id="UPA00070">
    <property type="reaction ID" value="UER00945"/>
</dbReference>
<dbReference type="Proteomes" id="UP000002210">
    <property type="component" value="Chromosome"/>
</dbReference>
<dbReference type="GO" id="GO:0005737">
    <property type="term" value="C:cytoplasm"/>
    <property type="evidence" value="ECO:0007669"/>
    <property type="project" value="UniProtKB-SubCell"/>
</dbReference>
<dbReference type="GO" id="GO:0004589">
    <property type="term" value="F:dihydroorotate dehydrogenase (NAD+) activity"/>
    <property type="evidence" value="ECO:0007669"/>
    <property type="project" value="UniProtKB-EC"/>
</dbReference>
<dbReference type="GO" id="GO:0006207">
    <property type="term" value="P:'de novo' pyrimidine nucleobase biosynthetic process"/>
    <property type="evidence" value="ECO:0007669"/>
    <property type="project" value="InterPro"/>
</dbReference>
<dbReference type="GO" id="GO:0044205">
    <property type="term" value="P:'de novo' UMP biosynthetic process"/>
    <property type="evidence" value="ECO:0007669"/>
    <property type="project" value="UniProtKB-UniRule"/>
</dbReference>
<dbReference type="CDD" id="cd04740">
    <property type="entry name" value="DHOD_1B_like"/>
    <property type="match status" value="1"/>
</dbReference>
<dbReference type="FunFam" id="3.20.20.70:FF:000069">
    <property type="entry name" value="Dihydroorotate dehydrogenase"/>
    <property type="match status" value="1"/>
</dbReference>
<dbReference type="Gene3D" id="3.20.20.70">
    <property type="entry name" value="Aldolase class I"/>
    <property type="match status" value="1"/>
</dbReference>
<dbReference type="HAMAP" id="MF_00224">
    <property type="entry name" value="DHO_dh_type1"/>
    <property type="match status" value="1"/>
</dbReference>
<dbReference type="InterPro" id="IPR013785">
    <property type="entry name" value="Aldolase_TIM"/>
</dbReference>
<dbReference type="InterPro" id="IPR050074">
    <property type="entry name" value="DHO_dehydrogenase"/>
</dbReference>
<dbReference type="InterPro" id="IPR033888">
    <property type="entry name" value="DHOD_1B"/>
</dbReference>
<dbReference type="InterPro" id="IPR024920">
    <property type="entry name" value="Dihydroorotate_DH_1"/>
</dbReference>
<dbReference type="InterPro" id="IPR012135">
    <property type="entry name" value="Dihydroorotate_DH_1_2"/>
</dbReference>
<dbReference type="InterPro" id="IPR005720">
    <property type="entry name" value="Dihydroorotate_DH_cat"/>
</dbReference>
<dbReference type="InterPro" id="IPR001295">
    <property type="entry name" value="Dihydroorotate_DH_CS"/>
</dbReference>
<dbReference type="InterPro" id="IPR049622">
    <property type="entry name" value="Dihydroorotate_DH_I"/>
</dbReference>
<dbReference type="NCBIfam" id="NF005574">
    <property type="entry name" value="PRK07259.1"/>
    <property type="match status" value="1"/>
</dbReference>
<dbReference type="NCBIfam" id="TIGR01037">
    <property type="entry name" value="pyrD_sub1_fam"/>
    <property type="match status" value="1"/>
</dbReference>
<dbReference type="PANTHER" id="PTHR48109:SF1">
    <property type="entry name" value="DIHYDROOROTATE DEHYDROGENASE (FUMARATE)"/>
    <property type="match status" value="1"/>
</dbReference>
<dbReference type="PANTHER" id="PTHR48109">
    <property type="entry name" value="DIHYDROOROTATE DEHYDROGENASE (QUINONE), MITOCHONDRIAL-RELATED"/>
    <property type="match status" value="1"/>
</dbReference>
<dbReference type="Pfam" id="PF01180">
    <property type="entry name" value="DHO_dh"/>
    <property type="match status" value="1"/>
</dbReference>
<dbReference type="PIRSF" id="PIRSF000164">
    <property type="entry name" value="DHO_oxidase"/>
    <property type="match status" value="1"/>
</dbReference>
<dbReference type="SUPFAM" id="SSF51395">
    <property type="entry name" value="FMN-linked oxidoreductases"/>
    <property type="match status" value="1"/>
</dbReference>
<dbReference type="PROSITE" id="PS00911">
    <property type="entry name" value="DHODEHASE_1"/>
    <property type="match status" value="1"/>
</dbReference>
<dbReference type="PROSITE" id="PS00912">
    <property type="entry name" value="DHODEHASE_2"/>
    <property type="match status" value="1"/>
</dbReference>
<gene>
    <name type="primary">pyrD</name>
    <name type="ordered locus">BCA_3985</name>
</gene>
<feature type="chain" id="PRO_1000195041" description="Dihydroorotate dehydrogenase B (NAD(+)), catalytic subunit">
    <location>
        <begin position="1"/>
        <end position="309"/>
    </location>
</feature>
<feature type="active site" description="Nucleophile">
    <location>
        <position position="130"/>
    </location>
</feature>
<feature type="binding site" evidence="1">
    <location>
        <position position="21"/>
    </location>
    <ligand>
        <name>FMN</name>
        <dbReference type="ChEBI" id="CHEBI:58210"/>
    </ligand>
</feature>
<feature type="binding site" evidence="1">
    <location>
        <begin position="45"/>
        <end position="46"/>
    </location>
    <ligand>
        <name>FMN</name>
        <dbReference type="ChEBI" id="CHEBI:58210"/>
    </ligand>
</feature>
<feature type="binding site" evidence="1">
    <location>
        <position position="45"/>
    </location>
    <ligand>
        <name>substrate</name>
    </ligand>
</feature>
<feature type="binding site" evidence="1">
    <location>
        <begin position="69"/>
        <end position="73"/>
    </location>
    <ligand>
        <name>substrate</name>
    </ligand>
</feature>
<feature type="binding site" evidence="1">
    <location>
        <position position="99"/>
    </location>
    <ligand>
        <name>FMN</name>
        <dbReference type="ChEBI" id="CHEBI:58210"/>
    </ligand>
</feature>
<feature type="binding site" evidence="1">
    <location>
        <position position="127"/>
    </location>
    <ligand>
        <name>FMN</name>
        <dbReference type="ChEBI" id="CHEBI:58210"/>
    </ligand>
</feature>
<feature type="binding site" evidence="1">
    <location>
        <position position="127"/>
    </location>
    <ligand>
        <name>substrate</name>
    </ligand>
</feature>
<feature type="binding site" evidence="1">
    <location>
        <position position="165"/>
    </location>
    <ligand>
        <name>FMN</name>
        <dbReference type="ChEBI" id="CHEBI:58210"/>
    </ligand>
</feature>
<feature type="binding site" evidence="1">
    <location>
        <position position="191"/>
    </location>
    <ligand>
        <name>FMN</name>
        <dbReference type="ChEBI" id="CHEBI:58210"/>
    </ligand>
</feature>
<feature type="binding site" evidence="1">
    <location>
        <begin position="192"/>
        <end position="193"/>
    </location>
    <ligand>
        <name>substrate</name>
    </ligand>
</feature>
<feature type="binding site" evidence="1">
    <location>
        <position position="217"/>
    </location>
    <ligand>
        <name>FMN</name>
        <dbReference type="ChEBI" id="CHEBI:58210"/>
    </ligand>
</feature>
<feature type="binding site" evidence="1">
    <location>
        <begin position="243"/>
        <end position="244"/>
    </location>
    <ligand>
        <name>FMN</name>
        <dbReference type="ChEBI" id="CHEBI:58210"/>
    </ligand>
</feature>
<feature type="binding site" evidence="1">
    <location>
        <begin position="265"/>
        <end position="266"/>
    </location>
    <ligand>
        <name>FMN</name>
        <dbReference type="ChEBI" id="CHEBI:58210"/>
    </ligand>
</feature>
<organism>
    <name type="scientific">Bacillus cereus (strain 03BB102)</name>
    <dbReference type="NCBI Taxonomy" id="572264"/>
    <lineage>
        <taxon>Bacteria</taxon>
        <taxon>Bacillati</taxon>
        <taxon>Bacillota</taxon>
        <taxon>Bacilli</taxon>
        <taxon>Bacillales</taxon>
        <taxon>Bacillaceae</taxon>
        <taxon>Bacillus</taxon>
        <taxon>Bacillus cereus group</taxon>
    </lineage>
</organism>